<comment type="function">
    <text evidence="1">NDH-1 shuttles electrons from an unknown electron donor, via FMN and iron-sulfur (Fe-S) centers, to quinones in the respiratory and/or the photosynthetic chain. The immediate electron acceptor for the enzyme in this species is believed to be plastoquinone. Couples the redox reaction to proton translocation, and thus conserves the redox energy in a proton gradient. Cyanobacterial NDH-1 also plays a role in inorganic carbon-concentration.</text>
</comment>
<comment type="catalytic activity">
    <reaction evidence="1">
        <text>a plastoquinone + NADH + (n+1) H(+)(in) = a plastoquinol + NAD(+) + n H(+)(out)</text>
        <dbReference type="Rhea" id="RHEA:42608"/>
        <dbReference type="Rhea" id="RHEA-COMP:9561"/>
        <dbReference type="Rhea" id="RHEA-COMP:9562"/>
        <dbReference type="ChEBI" id="CHEBI:15378"/>
        <dbReference type="ChEBI" id="CHEBI:17757"/>
        <dbReference type="ChEBI" id="CHEBI:57540"/>
        <dbReference type="ChEBI" id="CHEBI:57945"/>
        <dbReference type="ChEBI" id="CHEBI:62192"/>
    </reaction>
</comment>
<comment type="catalytic activity">
    <reaction evidence="1">
        <text>a plastoquinone + NADPH + (n+1) H(+)(in) = a plastoquinol + NADP(+) + n H(+)(out)</text>
        <dbReference type="Rhea" id="RHEA:42612"/>
        <dbReference type="Rhea" id="RHEA-COMP:9561"/>
        <dbReference type="Rhea" id="RHEA-COMP:9562"/>
        <dbReference type="ChEBI" id="CHEBI:15378"/>
        <dbReference type="ChEBI" id="CHEBI:17757"/>
        <dbReference type="ChEBI" id="CHEBI:57783"/>
        <dbReference type="ChEBI" id="CHEBI:58349"/>
        <dbReference type="ChEBI" id="CHEBI:62192"/>
    </reaction>
</comment>
<comment type="subunit">
    <text evidence="1">NDH-1 can be composed of about 15 different subunits; different subcomplexes with different compositions have been identified which probably have different functions.</text>
</comment>
<comment type="subcellular location">
    <subcellularLocation>
        <location evidence="1">Cellular thylakoid membrane</location>
        <topology evidence="1">Multi-pass membrane protein</topology>
    </subcellularLocation>
</comment>
<comment type="similarity">
    <text evidence="1">Belongs to the complex I NdhL subunit family.</text>
</comment>
<dbReference type="EC" id="7.1.1.-" evidence="1"/>
<dbReference type="EMBL" id="CP000551">
    <property type="protein sequence ID" value="ABM69912.1"/>
    <property type="molecule type" value="Genomic_DNA"/>
</dbReference>
<dbReference type="RefSeq" id="WP_011818074.1">
    <property type="nucleotide sequence ID" value="NC_008816.1"/>
</dbReference>
<dbReference type="SMR" id="A2BQ51"/>
<dbReference type="STRING" id="146891.A9601_06261"/>
<dbReference type="KEGG" id="pmb:A9601_06261"/>
<dbReference type="eggNOG" id="ENOG5030RAT">
    <property type="taxonomic scope" value="Bacteria"/>
</dbReference>
<dbReference type="HOGENOM" id="CLU_171077_1_0_3"/>
<dbReference type="OrthoDB" id="517549at2"/>
<dbReference type="Proteomes" id="UP000002590">
    <property type="component" value="Chromosome"/>
</dbReference>
<dbReference type="GO" id="GO:0031676">
    <property type="term" value="C:plasma membrane-derived thylakoid membrane"/>
    <property type="evidence" value="ECO:0007669"/>
    <property type="project" value="UniProtKB-SubCell"/>
</dbReference>
<dbReference type="GO" id="GO:0016655">
    <property type="term" value="F:oxidoreductase activity, acting on NAD(P)H, quinone or similar compound as acceptor"/>
    <property type="evidence" value="ECO:0007669"/>
    <property type="project" value="UniProtKB-UniRule"/>
</dbReference>
<dbReference type="GO" id="GO:0048038">
    <property type="term" value="F:quinone binding"/>
    <property type="evidence" value="ECO:0007669"/>
    <property type="project" value="UniProtKB-KW"/>
</dbReference>
<dbReference type="HAMAP" id="MF_01355">
    <property type="entry name" value="NDH1_NDH1L"/>
    <property type="match status" value="1"/>
</dbReference>
<dbReference type="InterPro" id="IPR019654">
    <property type="entry name" value="NADH-quinone_OxRdatse_su_L"/>
</dbReference>
<dbReference type="Pfam" id="PF10716">
    <property type="entry name" value="NdhL"/>
    <property type="match status" value="1"/>
</dbReference>
<evidence type="ECO:0000255" key="1">
    <source>
        <dbReference type="HAMAP-Rule" id="MF_01355"/>
    </source>
</evidence>
<proteinExistence type="inferred from homology"/>
<sequence length="77" mass="8994">MESFFNNTFATLIAYIGIIFTYLLVIPLLLFYWMNNRWNIMGKFERLGIYGLVFLFFPGLILFSPFLNLRLKGSGKG</sequence>
<organism>
    <name type="scientific">Prochlorococcus marinus (strain AS9601)</name>
    <dbReference type="NCBI Taxonomy" id="146891"/>
    <lineage>
        <taxon>Bacteria</taxon>
        <taxon>Bacillati</taxon>
        <taxon>Cyanobacteriota</taxon>
        <taxon>Cyanophyceae</taxon>
        <taxon>Synechococcales</taxon>
        <taxon>Prochlorococcaceae</taxon>
        <taxon>Prochlorococcus</taxon>
    </lineage>
</organism>
<protein>
    <recommendedName>
        <fullName evidence="1">NAD(P)H-quinone oxidoreductase subunit L</fullName>
        <ecNumber evidence="1">7.1.1.-</ecNumber>
    </recommendedName>
    <alternativeName>
        <fullName evidence="1">NAD(P)H dehydrogenase I subunit L</fullName>
    </alternativeName>
    <alternativeName>
        <fullName>NDH-1 subunit L</fullName>
    </alternativeName>
    <alternativeName>
        <fullName>NDH-L</fullName>
    </alternativeName>
</protein>
<reference key="1">
    <citation type="journal article" date="2007" name="PLoS Genet.">
        <title>Patterns and implications of gene gain and loss in the evolution of Prochlorococcus.</title>
        <authorList>
            <person name="Kettler G.C."/>
            <person name="Martiny A.C."/>
            <person name="Huang K."/>
            <person name="Zucker J."/>
            <person name="Coleman M.L."/>
            <person name="Rodrigue S."/>
            <person name="Chen F."/>
            <person name="Lapidus A."/>
            <person name="Ferriera S."/>
            <person name="Johnson J."/>
            <person name="Steglich C."/>
            <person name="Church G.M."/>
            <person name="Richardson P."/>
            <person name="Chisholm S.W."/>
        </authorList>
    </citation>
    <scope>NUCLEOTIDE SEQUENCE [LARGE SCALE GENOMIC DNA]</scope>
    <source>
        <strain>AS9601</strain>
    </source>
</reference>
<accession>A2BQ51</accession>
<gene>
    <name evidence="1" type="primary">ndhL</name>
    <name type="ordered locus">A9601_06261</name>
</gene>
<feature type="chain" id="PRO_0000353672" description="NAD(P)H-quinone oxidoreductase subunit L">
    <location>
        <begin position="1"/>
        <end position="77"/>
    </location>
</feature>
<feature type="transmembrane region" description="Helical" evidence="1">
    <location>
        <begin position="12"/>
        <end position="32"/>
    </location>
</feature>
<feature type="transmembrane region" description="Helical" evidence="1">
    <location>
        <begin position="47"/>
        <end position="67"/>
    </location>
</feature>
<name>NDHL_PROMS</name>
<keyword id="KW-0472">Membrane</keyword>
<keyword id="KW-0520">NAD</keyword>
<keyword id="KW-0521">NADP</keyword>
<keyword id="KW-0618">Plastoquinone</keyword>
<keyword id="KW-0874">Quinone</keyword>
<keyword id="KW-0793">Thylakoid</keyword>
<keyword id="KW-1278">Translocase</keyword>
<keyword id="KW-0812">Transmembrane</keyword>
<keyword id="KW-1133">Transmembrane helix</keyword>
<keyword id="KW-0813">Transport</keyword>